<accession>Q92AE2</accession>
<reference key="1">
    <citation type="journal article" date="2001" name="Science">
        <title>Comparative genomics of Listeria species.</title>
        <authorList>
            <person name="Glaser P."/>
            <person name="Frangeul L."/>
            <person name="Buchrieser C."/>
            <person name="Rusniok C."/>
            <person name="Amend A."/>
            <person name="Baquero F."/>
            <person name="Berche P."/>
            <person name="Bloecker H."/>
            <person name="Brandt P."/>
            <person name="Chakraborty T."/>
            <person name="Charbit A."/>
            <person name="Chetouani F."/>
            <person name="Couve E."/>
            <person name="de Daruvar A."/>
            <person name="Dehoux P."/>
            <person name="Domann E."/>
            <person name="Dominguez-Bernal G."/>
            <person name="Duchaud E."/>
            <person name="Durant L."/>
            <person name="Dussurget O."/>
            <person name="Entian K.-D."/>
            <person name="Fsihi H."/>
            <person name="Garcia-del Portillo F."/>
            <person name="Garrido P."/>
            <person name="Gautier L."/>
            <person name="Goebel W."/>
            <person name="Gomez-Lopez N."/>
            <person name="Hain T."/>
            <person name="Hauf J."/>
            <person name="Jackson D."/>
            <person name="Jones L.-M."/>
            <person name="Kaerst U."/>
            <person name="Kreft J."/>
            <person name="Kuhn M."/>
            <person name="Kunst F."/>
            <person name="Kurapkat G."/>
            <person name="Madueno E."/>
            <person name="Maitournam A."/>
            <person name="Mata Vicente J."/>
            <person name="Ng E."/>
            <person name="Nedjari H."/>
            <person name="Nordsiek G."/>
            <person name="Novella S."/>
            <person name="de Pablos B."/>
            <person name="Perez-Diaz J.-C."/>
            <person name="Purcell R."/>
            <person name="Remmel B."/>
            <person name="Rose M."/>
            <person name="Schlueter T."/>
            <person name="Simoes N."/>
            <person name="Tierrez A."/>
            <person name="Vazquez-Boland J.-A."/>
            <person name="Voss H."/>
            <person name="Wehland J."/>
            <person name="Cossart P."/>
        </authorList>
    </citation>
    <scope>NUCLEOTIDE SEQUENCE [LARGE SCALE GENOMIC DNA]</scope>
    <source>
        <strain>ATCC BAA-680 / CLIP 11262</strain>
    </source>
</reference>
<sequence length="270" mass="30047">MENPVIIYVISDAIGETAQHIIRAVTAQFSLNKPADIRRHAFIRDENALLETLEEAKAADGIVVQTLVQSKLADYASNFCVKNHLQNVDLLHTLTAAVEAKTGLKSKQDPGNMRRLDSNYFDRIAAIEFAVKYDDCKDPRGLLDADIVLVGVSRTSKTPLSSYLANQNWKVANVPLVPEIPIPDELFQIPAERIIGLTTTPEKLAQIRKVRLKSIGLDEASSYSSEKRILEELEYGYATFKKLGCQVIHVEDKAIEETAALITEIITSYH</sequence>
<name>PDRP2_LISIN</name>
<protein>
    <recommendedName>
        <fullName evidence="1">Putative pyruvate, phosphate dikinase regulatory protein 2</fullName>
        <shortName evidence="1">PPDK regulatory protein 2</shortName>
        <ecNumber evidence="1">2.7.11.32</ecNumber>
        <ecNumber evidence="1">2.7.4.27</ecNumber>
    </recommendedName>
</protein>
<gene>
    <name type="ordered locus">lin1980</name>
</gene>
<evidence type="ECO:0000255" key="1">
    <source>
        <dbReference type="HAMAP-Rule" id="MF_00921"/>
    </source>
</evidence>
<comment type="function">
    <text evidence="1">Bifunctional serine/threonine kinase and phosphorylase involved in the regulation of the pyruvate, phosphate dikinase (PPDK) by catalyzing its phosphorylation/dephosphorylation.</text>
</comment>
<comment type="catalytic activity">
    <reaction evidence="1">
        <text>N(tele)-phospho-L-histidyl/L-threonyl-[pyruvate, phosphate dikinase] + ADP = N(tele)-phospho-L-histidyl/O-phospho-L-threonyl-[pyruvate, phosphate dikinase] + AMP + H(+)</text>
        <dbReference type="Rhea" id="RHEA:43692"/>
        <dbReference type="Rhea" id="RHEA-COMP:10650"/>
        <dbReference type="Rhea" id="RHEA-COMP:10651"/>
        <dbReference type="ChEBI" id="CHEBI:15378"/>
        <dbReference type="ChEBI" id="CHEBI:30013"/>
        <dbReference type="ChEBI" id="CHEBI:61977"/>
        <dbReference type="ChEBI" id="CHEBI:83586"/>
        <dbReference type="ChEBI" id="CHEBI:456215"/>
        <dbReference type="ChEBI" id="CHEBI:456216"/>
        <dbReference type="EC" id="2.7.11.32"/>
    </reaction>
</comment>
<comment type="catalytic activity">
    <reaction evidence="1">
        <text>N(tele)-phospho-L-histidyl/O-phospho-L-threonyl-[pyruvate, phosphate dikinase] + phosphate + H(+) = N(tele)-phospho-L-histidyl/L-threonyl-[pyruvate, phosphate dikinase] + diphosphate</text>
        <dbReference type="Rhea" id="RHEA:43696"/>
        <dbReference type="Rhea" id="RHEA-COMP:10650"/>
        <dbReference type="Rhea" id="RHEA-COMP:10651"/>
        <dbReference type="ChEBI" id="CHEBI:15378"/>
        <dbReference type="ChEBI" id="CHEBI:30013"/>
        <dbReference type="ChEBI" id="CHEBI:33019"/>
        <dbReference type="ChEBI" id="CHEBI:43474"/>
        <dbReference type="ChEBI" id="CHEBI:61977"/>
        <dbReference type="ChEBI" id="CHEBI:83586"/>
        <dbReference type="EC" id="2.7.4.27"/>
    </reaction>
</comment>
<comment type="similarity">
    <text evidence="1">Belongs to the pyruvate, phosphate/water dikinase regulatory protein family. PDRP subfamily.</text>
</comment>
<feature type="chain" id="PRO_0000196671" description="Putative pyruvate, phosphate dikinase regulatory protein 2">
    <location>
        <begin position="1"/>
        <end position="270"/>
    </location>
</feature>
<feature type="binding site" evidence="1">
    <location>
        <begin position="151"/>
        <end position="158"/>
    </location>
    <ligand>
        <name>ADP</name>
        <dbReference type="ChEBI" id="CHEBI:456216"/>
    </ligand>
</feature>
<keyword id="KW-0418">Kinase</keyword>
<keyword id="KW-0547">Nucleotide-binding</keyword>
<keyword id="KW-0723">Serine/threonine-protein kinase</keyword>
<keyword id="KW-0808">Transferase</keyword>
<dbReference type="EC" id="2.7.11.32" evidence="1"/>
<dbReference type="EC" id="2.7.4.27" evidence="1"/>
<dbReference type="EMBL" id="AL596170">
    <property type="protein sequence ID" value="CAC97210.1"/>
    <property type="molecule type" value="Genomic_DNA"/>
</dbReference>
<dbReference type="PIR" id="AB1680">
    <property type="entry name" value="AB1680"/>
</dbReference>
<dbReference type="RefSeq" id="WP_010991689.1">
    <property type="nucleotide sequence ID" value="NC_003212.1"/>
</dbReference>
<dbReference type="SMR" id="Q92AE2"/>
<dbReference type="STRING" id="272626.gene:17566338"/>
<dbReference type="KEGG" id="lin:lin1980"/>
<dbReference type="eggNOG" id="COG1806">
    <property type="taxonomic scope" value="Bacteria"/>
</dbReference>
<dbReference type="HOGENOM" id="CLU_046206_2_1_9"/>
<dbReference type="OrthoDB" id="9782201at2"/>
<dbReference type="Proteomes" id="UP000002513">
    <property type="component" value="Chromosome"/>
</dbReference>
<dbReference type="GO" id="GO:0043531">
    <property type="term" value="F:ADP binding"/>
    <property type="evidence" value="ECO:0007669"/>
    <property type="project" value="UniProtKB-UniRule"/>
</dbReference>
<dbReference type="GO" id="GO:0005524">
    <property type="term" value="F:ATP binding"/>
    <property type="evidence" value="ECO:0007669"/>
    <property type="project" value="InterPro"/>
</dbReference>
<dbReference type="GO" id="GO:0016776">
    <property type="term" value="F:phosphotransferase activity, phosphate group as acceptor"/>
    <property type="evidence" value="ECO:0007669"/>
    <property type="project" value="UniProtKB-UniRule"/>
</dbReference>
<dbReference type="GO" id="GO:0004674">
    <property type="term" value="F:protein serine/threonine kinase activity"/>
    <property type="evidence" value="ECO:0007669"/>
    <property type="project" value="UniProtKB-UniRule"/>
</dbReference>
<dbReference type="HAMAP" id="MF_00921">
    <property type="entry name" value="PDRP"/>
    <property type="match status" value="1"/>
</dbReference>
<dbReference type="InterPro" id="IPR005177">
    <property type="entry name" value="Kinase-pyrophosphorylase"/>
</dbReference>
<dbReference type="InterPro" id="IPR026565">
    <property type="entry name" value="PPDK_reg"/>
</dbReference>
<dbReference type="NCBIfam" id="NF003742">
    <property type="entry name" value="PRK05339.1"/>
    <property type="match status" value="1"/>
</dbReference>
<dbReference type="PANTHER" id="PTHR31756">
    <property type="entry name" value="PYRUVATE, PHOSPHATE DIKINASE REGULATORY PROTEIN 1, CHLOROPLASTIC"/>
    <property type="match status" value="1"/>
</dbReference>
<dbReference type="PANTHER" id="PTHR31756:SF3">
    <property type="entry name" value="PYRUVATE, PHOSPHATE DIKINASE REGULATORY PROTEIN 1, CHLOROPLASTIC"/>
    <property type="match status" value="1"/>
</dbReference>
<dbReference type="Pfam" id="PF03618">
    <property type="entry name" value="Kinase-PPPase"/>
    <property type="match status" value="1"/>
</dbReference>
<organism>
    <name type="scientific">Listeria innocua serovar 6a (strain ATCC BAA-680 / CLIP 11262)</name>
    <dbReference type="NCBI Taxonomy" id="272626"/>
    <lineage>
        <taxon>Bacteria</taxon>
        <taxon>Bacillati</taxon>
        <taxon>Bacillota</taxon>
        <taxon>Bacilli</taxon>
        <taxon>Bacillales</taxon>
        <taxon>Listeriaceae</taxon>
        <taxon>Listeria</taxon>
    </lineage>
</organism>
<proteinExistence type="inferred from homology"/>